<protein>
    <recommendedName>
        <fullName>Fibrous sheath-interacting protein 1</fullName>
    </recommendedName>
</protein>
<proteinExistence type="evidence at protein level"/>
<accession>Q9D3V5</accession>
<accession>Q8R4I9</accession>
<accession>Q9DAD8</accession>
<keyword id="KW-0025">Alternative splicing</keyword>
<keyword id="KW-0175">Coiled coil</keyword>
<keyword id="KW-0597">Phosphoprotein</keyword>
<keyword id="KW-1185">Reference proteome</keyword>
<comment type="subunit">
    <text evidence="6">May interact with AKAP4.</text>
</comment>
<comment type="alternative products">
    <event type="alternative splicing"/>
    <isoform>
        <id>Q9D3V5-1</id>
        <name>1</name>
        <sequence type="displayed"/>
    </isoform>
    <isoform>
        <id>Q9D3V5-2</id>
        <name>2</name>
        <sequence type="described" ref="VSP_030430 VSP_030431"/>
    </isoform>
</comment>
<comment type="tissue specificity">
    <text evidence="4">Detected in male germ cells and testis.</text>
</comment>
<comment type="developmental stage">
    <text evidence="4">First detected in testis of 18 day old mice.</text>
</comment>
<comment type="similarity">
    <text evidence="6">Belongs to the FSIP1 family.</text>
</comment>
<gene>
    <name type="primary">Fsip1</name>
</gene>
<evidence type="ECO:0000250" key="1">
    <source>
        <dbReference type="UniProtKB" id="Q66H16"/>
    </source>
</evidence>
<evidence type="ECO:0000255" key="2"/>
<evidence type="ECO:0000256" key="3">
    <source>
        <dbReference type="SAM" id="MobiDB-lite"/>
    </source>
</evidence>
<evidence type="ECO:0000269" key="4">
    <source>
    </source>
</evidence>
<evidence type="ECO:0000303" key="5">
    <source>
    </source>
</evidence>
<evidence type="ECO:0000305" key="6"/>
<dbReference type="EMBL" id="AF448787">
    <property type="protein sequence ID" value="AAM18537.1"/>
    <property type="molecule type" value="mRNA"/>
</dbReference>
<dbReference type="EMBL" id="AK005924">
    <property type="protein sequence ID" value="BAB24319.1"/>
    <property type="molecule type" value="mRNA"/>
</dbReference>
<dbReference type="EMBL" id="AK017026">
    <property type="protein sequence ID" value="BAB30556.1"/>
    <property type="molecule type" value="mRNA"/>
</dbReference>
<dbReference type="EMBL" id="AL845495">
    <property type="status" value="NOT_ANNOTATED_CDS"/>
    <property type="molecule type" value="Genomic_DNA"/>
</dbReference>
<dbReference type="EMBL" id="BC125024">
    <property type="protein sequence ID" value="AAI25025.1"/>
    <property type="molecule type" value="mRNA"/>
</dbReference>
<dbReference type="CCDS" id="CCDS16573.1">
    <molecule id="Q9D3V5-1"/>
</dbReference>
<dbReference type="RefSeq" id="NP_082035.1">
    <molecule id="Q9D3V5-1"/>
    <property type="nucleotide sequence ID" value="NM_027759.3"/>
</dbReference>
<dbReference type="SMR" id="Q9D3V5"/>
<dbReference type="BioGRID" id="214629">
    <property type="interactions" value="1"/>
</dbReference>
<dbReference type="FunCoup" id="Q9D3V5">
    <property type="interactions" value="80"/>
</dbReference>
<dbReference type="STRING" id="10090.ENSMUSP00000028821"/>
<dbReference type="GlyGen" id="Q9D3V5">
    <property type="glycosylation" value="1 site"/>
</dbReference>
<dbReference type="PhosphoSitePlus" id="Q9D3V5"/>
<dbReference type="PaxDb" id="10090-ENSMUSP00000028821"/>
<dbReference type="ProteomicsDB" id="267412">
    <molecule id="Q9D3V5-1"/>
</dbReference>
<dbReference type="ProteomicsDB" id="267413">
    <molecule id="Q9D3V5-2"/>
</dbReference>
<dbReference type="Antibodypedia" id="52142">
    <property type="antibodies" value="231 antibodies from 20 providers"/>
</dbReference>
<dbReference type="Ensembl" id="ENSMUST00000028820.7">
    <molecule id="Q9D3V5-2"/>
    <property type="protein sequence ID" value="ENSMUSP00000028820.7"/>
    <property type="gene ID" value="ENSMUSG00000027344.15"/>
</dbReference>
<dbReference type="Ensembl" id="ENSMUST00000028821.10">
    <molecule id="Q9D3V5-1"/>
    <property type="protein sequence ID" value="ENSMUSP00000028821.4"/>
    <property type="gene ID" value="ENSMUSG00000027344.15"/>
</dbReference>
<dbReference type="GeneID" id="71313"/>
<dbReference type="KEGG" id="mmu:71313"/>
<dbReference type="UCSC" id="uc008lrs.2">
    <molecule id="Q9D3V5-1"/>
    <property type="organism name" value="mouse"/>
</dbReference>
<dbReference type="AGR" id="MGI:1918563"/>
<dbReference type="CTD" id="161835"/>
<dbReference type="MGI" id="MGI:1918563">
    <property type="gene designation" value="Fsip1"/>
</dbReference>
<dbReference type="VEuPathDB" id="HostDB:ENSMUSG00000027344"/>
<dbReference type="eggNOG" id="ENOG502RXFB">
    <property type="taxonomic scope" value="Eukaryota"/>
</dbReference>
<dbReference type="GeneTree" id="ENSGT00390000013879"/>
<dbReference type="HOGENOM" id="CLU_031884_1_0_1"/>
<dbReference type="InParanoid" id="Q9D3V5"/>
<dbReference type="OMA" id="EPASCKV"/>
<dbReference type="PhylomeDB" id="Q9D3V5"/>
<dbReference type="TreeFam" id="TF351151"/>
<dbReference type="BioGRID-ORCS" id="71313">
    <property type="hits" value="0 hits in 78 CRISPR screens"/>
</dbReference>
<dbReference type="ChiTaRS" id="Fsip1">
    <property type="organism name" value="mouse"/>
</dbReference>
<dbReference type="PRO" id="PR:Q9D3V5"/>
<dbReference type="Proteomes" id="UP000000589">
    <property type="component" value="Chromosome 2"/>
</dbReference>
<dbReference type="RNAct" id="Q9D3V5">
    <property type="molecule type" value="protein"/>
</dbReference>
<dbReference type="Bgee" id="ENSMUSG00000027344">
    <property type="expression patterns" value="Expressed in seminiferous tubule of testis and 55 other cell types or tissues"/>
</dbReference>
<dbReference type="ExpressionAtlas" id="Q9D3V5">
    <property type="expression patterns" value="baseline and differential"/>
</dbReference>
<dbReference type="GO" id="GO:0001669">
    <property type="term" value="C:acrosomal vesicle"/>
    <property type="evidence" value="ECO:0000315"/>
    <property type="project" value="MGI"/>
</dbReference>
<dbReference type="GO" id="GO:0031514">
    <property type="term" value="C:motile cilium"/>
    <property type="evidence" value="ECO:0000305"/>
    <property type="project" value="MGI"/>
</dbReference>
<dbReference type="GO" id="GO:0005634">
    <property type="term" value="C:nucleus"/>
    <property type="evidence" value="ECO:0000314"/>
    <property type="project" value="MGI"/>
</dbReference>
<dbReference type="GO" id="GO:0061827">
    <property type="term" value="C:sperm head"/>
    <property type="evidence" value="ECO:0000314"/>
    <property type="project" value="MGI"/>
</dbReference>
<dbReference type="GO" id="GO:0001675">
    <property type="term" value="P:acrosome assembly"/>
    <property type="evidence" value="ECO:0000315"/>
    <property type="project" value="MGI"/>
</dbReference>
<dbReference type="GO" id="GO:0035082">
    <property type="term" value="P:axoneme assembly"/>
    <property type="evidence" value="ECO:0000315"/>
    <property type="project" value="MGI"/>
</dbReference>
<dbReference type="GO" id="GO:0060271">
    <property type="term" value="P:cilium assembly"/>
    <property type="evidence" value="ECO:0000315"/>
    <property type="project" value="MGI"/>
</dbReference>
<dbReference type="GO" id="GO:0048873">
    <property type="term" value="P:homeostasis of number of cells within a tissue"/>
    <property type="evidence" value="ECO:0000315"/>
    <property type="project" value="MGI"/>
</dbReference>
<dbReference type="GO" id="GO:0007005">
    <property type="term" value="P:mitochondrion organization"/>
    <property type="evidence" value="ECO:0000315"/>
    <property type="project" value="MGI"/>
</dbReference>
<dbReference type="GO" id="GO:0007338">
    <property type="term" value="P:single fertilization"/>
    <property type="evidence" value="ECO:0000315"/>
    <property type="project" value="MGI"/>
</dbReference>
<dbReference type="GO" id="GO:0007033">
    <property type="term" value="P:vacuole organization"/>
    <property type="evidence" value="ECO:0000315"/>
    <property type="project" value="MGI"/>
</dbReference>
<dbReference type="GO" id="GO:0006900">
    <property type="term" value="P:vesicle budding from membrane"/>
    <property type="evidence" value="ECO:0000315"/>
    <property type="project" value="MGI"/>
</dbReference>
<dbReference type="InterPro" id="IPR026246">
    <property type="entry name" value="Fsip1"/>
</dbReference>
<dbReference type="PANTHER" id="PTHR22012">
    <property type="entry name" value="FIBROUS SHEATH INTERACTING PROTEIN 1"/>
    <property type="match status" value="1"/>
</dbReference>
<dbReference type="PANTHER" id="PTHR22012:SF2">
    <property type="entry name" value="FIBROUS SHEATH-INTERACTING PROTEIN 1"/>
    <property type="match status" value="1"/>
</dbReference>
<dbReference type="Pfam" id="PF15554">
    <property type="entry name" value="FSIP1"/>
    <property type="match status" value="1"/>
</dbReference>
<dbReference type="PRINTS" id="PR02075">
    <property type="entry name" value="FIBSHEATHIP1"/>
</dbReference>
<name>FSIP1_MOUSE</name>
<sequence>MPMDIIKGNLDGISKPASSSRSRPGSRSSNGSLEVLTPEPGSVKIDMVNKLNSGQEGHTSNSGVEERRNSNDAKWADDSKTKPAKESSDEDPDMPQPQATPEHSDDPKLEETNAVLQNAIRKMHRLDKLLAKKQCREKEVKKQGLEMRVKLWEELKSAKNTEDLENDEELGNTKKFLCLTSESAGKAAAEALHCEFEDALFSVFHTQIPPETYENLMEKDFTCDVEKNEPLIITEKQPFSNTEAIEPRSEDSQGFIRQNAEHSQDFIKRNIELAKHSRSPVVMVEGEKKRLDELLQGLDDADSGLSSAEGDQCGWLVPGEGYTLAATESQQLAEIDIKLQELSVDSPTIFSLESQSHKGDMECDANEERNTEPTPGEKILRDRKEQRDRESRLRAIDGKLKELSEQVEECPMITPSKRNERITWRWLLAKILEPE</sequence>
<feature type="chain" id="PRO_0000314920" description="Fibrous sheath-interacting protein 1">
    <location>
        <begin position="1"/>
        <end position="435"/>
    </location>
</feature>
<feature type="region of interest" description="Disordered" evidence="3">
    <location>
        <begin position="1"/>
        <end position="109"/>
    </location>
</feature>
<feature type="region of interest" description="Disordered" evidence="3">
    <location>
        <begin position="354"/>
        <end position="393"/>
    </location>
</feature>
<feature type="coiled-coil region" evidence="2">
    <location>
        <begin position="108"/>
        <end position="154"/>
    </location>
</feature>
<feature type="compositionally biased region" description="Low complexity" evidence="3">
    <location>
        <begin position="18"/>
        <end position="32"/>
    </location>
</feature>
<feature type="compositionally biased region" description="Polar residues" evidence="3">
    <location>
        <begin position="50"/>
        <end position="63"/>
    </location>
</feature>
<feature type="compositionally biased region" description="Basic and acidic residues" evidence="3">
    <location>
        <begin position="64"/>
        <end position="87"/>
    </location>
</feature>
<feature type="compositionally biased region" description="Basic and acidic residues" evidence="3">
    <location>
        <begin position="355"/>
        <end position="371"/>
    </location>
</feature>
<feature type="compositionally biased region" description="Basic and acidic residues" evidence="3">
    <location>
        <begin position="378"/>
        <end position="393"/>
    </location>
</feature>
<feature type="modified residue" description="Phosphoserine" evidence="1">
    <location>
        <position position="87"/>
    </location>
</feature>
<feature type="modified residue" description="Phosphoserine" evidence="1">
    <location>
        <position position="88"/>
    </location>
</feature>
<feature type="splice variant" id="VSP_030430" description="In isoform 2." evidence="5">
    <original>AEALHCEFEDALFSVFHTQIPPETYENLMEKDF</original>
    <variation>GQPSLIMEDYSFNWYRFEWLNLFRSFISIKQD</variation>
    <location>
        <begin position="189"/>
        <end position="221"/>
    </location>
</feature>
<feature type="splice variant" id="VSP_030431" description="In isoform 2." evidence="5">
    <location>
        <begin position="222"/>
        <end position="435"/>
    </location>
</feature>
<feature type="sequence conflict" description="In Ref. 1; AAM18537 and 4; AAI25025." evidence="6" ref="1 4">
    <original>R</original>
    <variation>Q</variation>
    <location>
        <position position="27"/>
    </location>
</feature>
<feature type="sequence conflict" description="In Ref. 1; AAM18537 and 4; AAI25025." evidence="6" ref="1 4">
    <original>S</original>
    <variation>P</variation>
    <location>
        <position position="42"/>
    </location>
</feature>
<feature type="sequence conflict" description="In Ref. 1; AAM18537 and 4; AAI25025." evidence="6" ref="1 4">
    <original>A</original>
    <variation>V</variation>
    <location>
        <position position="84"/>
    </location>
</feature>
<feature type="sequence conflict" description="In Ref. 1; AAM18537 and 4; AAI25025." evidence="6" ref="1 4">
    <original>R</original>
    <variation>Q</variation>
    <location>
        <position position="381"/>
    </location>
</feature>
<organism>
    <name type="scientific">Mus musculus</name>
    <name type="common">Mouse</name>
    <dbReference type="NCBI Taxonomy" id="10090"/>
    <lineage>
        <taxon>Eukaryota</taxon>
        <taxon>Metazoa</taxon>
        <taxon>Chordata</taxon>
        <taxon>Craniata</taxon>
        <taxon>Vertebrata</taxon>
        <taxon>Euteleostomi</taxon>
        <taxon>Mammalia</taxon>
        <taxon>Eutheria</taxon>
        <taxon>Euarchontoglires</taxon>
        <taxon>Glires</taxon>
        <taxon>Rodentia</taxon>
        <taxon>Myomorpha</taxon>
        <taxon>Muroidea</taxon>
        <taxon>Muridae</taxon>
        <taxon>Murinae</taxon>
        <taxon>Mus</taxon>
        <taxon>Mus</taxon>
    </lineage>
</organism>
<reference key="1">
    <citation type="journal article" date="2003" name="Biol. Reprod.">
        <title>A-kinase anchoring protein 4 binding proteins in the fibrous sheath of the sperm flagellum.</title>
        <authorList>
            <person name="Brown P.R."/>
            <person name="Miki K."/>
            <person name="Harper D.B."/>
            <person name="Eddy E.M."/>
        </authorList>
    </citation>
    <scope>NUCLEOTIDE SEQUENCE [MRNA] (ISOFORM 1)</scope>
    <scope>POSSIBLE INTERACTION WITH AKAP4</scope>
    <scope>TISSUE SPECIFICITY</scope>
    <scope>DEVELOPMENTAL STAGE</scope>
    <source>
        <strain>129/Sv</strain>
        <tissue>Testis</tissue>
    </source>
</reference>
<reference key="2">
    <citation type="journal article" date="2005" name="Science">
        <title>The transcriptional landscape of the mammalian genome.</title>
        <authorList>
            <person name="Carninci P."/>
            <person name="Kasukawa T."/>
            <person name="Katayama S."/>
            <person name="Gough J."/>
            <person name="Frith M.C."/>
            <person name="Maeda N."/>
            <person name="Oyama R."/>
            <person name="Ravasi T."/>
            <person name="Lenhard B."/>
            <person name="Wells C."/>
            <person name="Kodzius R."/>
            <person name="Shimokawa K."/>
            <person name="Bajic V.B."/>
            <person name="Brenner S.E."/>
            <person name="Batalov S."/>
            <person name="Forrest A.R."/>
            <person name="Zavolan M."/>
            <person name="Davis M.J."/>
            <person name="Wilming L.G."/>
            <person name="Aidinis V."/>
            <person name="Allen J.E."/>
            <person name="Ambesi-Impiombato A."/>
            <person name="Apweiler R."/>
            <person name="Aturaliya R.N."/>
            <person name="Bailey T.L."/>
            <person name="Bansal M."/>
            <person name="Baxter L."/>
            <person name="Beisel K.W."/>
            <person name="Bersano T."/>
            <person name="Bono H."/>
            <person name="Chalk A.M."/>
            <person name="Chiu K.P."/>
            <person name="Choudhary V."/>
            <person name="Christoffels A."/>
            <person name="Clutterbuck D.R."/>
            <person name="Crowe M.L."/>
            <person name="Dalla E."/>
            <person name="Dalrymple B.P."/>
            <person name="de Bono B."/>
            <person name="Della Gatta G."/>
            <person name="di Bernardo D."/>
            <person name="Down T."/>
            <person name="Engstrom P."/>
            <person name="Fagiolini M."/>
            <person name="Faulkner G."/>
            <person name="Fletcher C.F."/>
            <person name="Fukushima T."/>
            <person name="Furuno M."/>
            <person name="Futaki S."/>
            <person name="Gariboldi M."/>
            <person name="Georgii-Hemming P."/>
            <person name="Gingeras T.R."/>
            <person name="Gojobori T."/>
            <person name="Green R.E."/>
            <person name="Gustincich S."/>
            <person name="Harbers M."/>
            <person name="Hayashi Y."/>
            <person name="Hensch T.K."/>
            <person name="Hirokawa N."/>
            <person name="Hill D."/>
            <person name="Huminiecki L."/>
            <person name="Iacono M."/>
            <person name="Ikeo K."/>
            <person name="Iwama A."/>
            <person name="Ishikawa T."/>
            <person name="Jakt M."/>
            <person name="Kanapin A."/>
            <person name="Katoh M."/>
            <person name="Kawasawa Y."/>
            <person name="Kelso J."/>
            <person name="Kitamura H."/>
            <person name="Kitano H."/>
            <person name="Kollias G."/>
            <person name="Krishnan S.P."/>
            <person name="Kruger A."/>
            <person name="Kummerfeld S.K."/>
            <person name="Kurochkin I.V."/>
            <person name="Lareau L.F."/>
            <person name="Lazarevic D."/>
            <person name="Lipovich L."/>
            <person name="Liu J."/>
            <person name="Liuni S."/>
            <person name="McWilliam S."/>
            <person name="Madan Babu M."/>
            <person name="Madera M."/>
            <person name="Marchionni L."/>
            <person name="Matsuda H."/>
            <person name="Matsuzawa S."/>
            <person name="Miki H."/>
            <person name="Mignone F."/>
            <person name="Miyake S."/>
            <person name="Morris K."/>
            <person name="Mottagui-Tabar S."/>
            <person name="Mulder N."/>
            <person name="Nakano N."/>
            <person name="Nakauchi H."/>
            <person name="Ng P."/>
            <person name="Nilsson R."/>
            <person name="Nishiguchi S."/>
            <person name="Nishikawa S."/>
            <person name="Nori F."/>
            <person name="Ohara O."/>
            <person name="Okazaki Y."/>
            <person name="Orlando V."/>
            <person name="Pang K.C."/>
            <person name="Pavan W.J."/>
            <person name="Pavesi G."/>
            <person name="Pesole G."/>
            <person name="Petrovsky N."/>
            <person name="Piazza S."/>
            <person name="Reed J."/>
            <person name="Reid J.F."/>
            <person name="Ring B.Z."/>
            <person name="Ringwald M."/>
            <person name="Rost B."/>
            <person name="Ruan Y."/>
            <person name="Salzberg S.L."/>
            <person name="Sandelin A."/>
            <person name="Schneider C."/>
            <person name="Schoenbach C."/>
            <person name="Sekiguchi K."/>
            <person name="Semple C.A."/>
            <person name="Seno S."/>
            <person name="Sessa L."/>
            <person name="Sheng Y."/>
            <person name="Shibata Y."/>
            <person name="Shimada H."/>
            <person name="Shimada K."/>
            <person name="Silva D."/>
            <person name="Sinclair B."/>
            <person name="Sperling S."/>
            <person name="Stupka E."/>
            <person name="Sugiura K."/>
            <person name="Sultana R."/>
            <person name="Takenaka Y."/>
            <person name="Taki K."/>
            <person name="Tammoja K."/>
            <person name="Tan S.L."/>
            <person name="Tang S."/>
            <person name="Taylor M.S."/>
            <person name="Tegner J."/>
            <person name="Teichmann S.A."/>
            <person name="Ueda H.R."/>
            <person name="van Nimwegen E."/>
            <person name="Verardo R."/>
            <person name="Wei C.L."/>
            <person name="Yagi K."/>
            <person name="Yamanishi H."/>
            <person name="Zabarovsky E."/>
            <person name="Zhu S."/>
            <person name="Zimmer A."/>
            <person name="Hide W."/>
            <person name="Bult C."/>
            <person name="Grimmond S.M."/>
            <person name="Teasdale R.D."/>
            <person name="Liu E.T."/>
            <person name="Brusic V."/>
            <person name="Quackenbush J."/>
            <person name="Wahlestedt C."/>
            <person name="Mattick J.S."/>
            <person name="Hume D.A."/>
            <person name="Kai C."/>
            <person name="Sasaki D."/>
            <person name="Tomaru Y."/>
            <person name="Fukuda S."/>
            <person name="Kanamori-Katayama M."/>
            <person name="Suzuki M."/>
            <person name="Aoki J."/>
            <person name="Arakawa T."/>
            <person name="Iida J."/>
            <person name="Imamura K."/>
            <person name="Itoh M."/>
            <person name="Kato T."/>
            <person name="Kawaji H."/>
            <person name="Kawagashira N."/>
            <person name="Kawashima T."/>
            <person name="Kojima M."/>
            <person name="Kondo S."/>
            <person name="Konno H."/>
            <person name="Nakano K."/>
            <person name="Ninomiya N."/>
            <person name="Nishio T."/>
            <person name="Okada M."/>
            <person name="Plessy C."/>
            <person name="Shibata K."/>
            <person name="Shiraki T."/>
            <person name="Suzuki S."/>
            <person name="Tagami M."/>
            <person name="Waki K."/>
            <person name="Watahiki A."/>
            <person name="Okamura-Oho Y."/>
            <person name="Suzuki H."/>
            <person name="Kawai J."/>
            <person name="Hayashizaki Y."/>
        </authorList>
    </citation>
    <scope>NUCLEOTIDE SEQUENCE [LARGE SCALE MRNA] (ISOFORMS 1 AND 2)</scope>
    <source>
        <strain>C57BL/6J</strain>
        <tissue>Testis</tissue>
    </source>
</reference>
<reference key="3">
    <citation type="journal article" date="2009" name="PLoS Biol.">
        <title>Lineage-specific biology revealed by a finished genome assembly of the mouse.</title>
        <authorList>
            <person name="Church D.M."/>
            <person name="Goodstadt L."/>
            <person name="Hillier L.W."/>
            <person name="Zody M.C."/>
            <person name="Goldstein S."/>
            <person name="She X."/>
            <person name="Bult C.J."/>
            <person name="Agarwala R."/>
            <person name="Cherry J.L."/>
            <person name="DiCuccio M."/>
            <person name="Hlavina W."/>
            <person name="Kapustin Y."/>
            <person name="Meric P."/>
            <person name="Maglott D."/>
            <person name="Birtle Z."/>
            <person name="Marques A.C."/>
            <person name="Graves T."/>
            <person name="Zhou S."/>
            <person name="Teague B."/>
            <person name="Potamousis K."/>
            <person name="Churas C."/>
            <person name="Place M."/>
            <person name="Herschleb J."/>
            <person name="Runnheim R."/>
            <person name="Forrest D."/>
            <person name="Amos-Landgraf J."/>
            <person name="Schwartz D.C."/>
            <person name="Cheng Z."/>
            <person name="Lindblad-Toh K."/>
            <person name="Eichler E.E."/>
            <person name="Ponting C.P."/>
        </authorList>
    </citation>
    <scope>NUCLEOTIDE SEQUENCE [LARGE SCALE GENOMIC DNA]</scope>
    <source>
        <strain>C57BL/6J</strain>
    </source>
</reference>
<reference key="4">
    <citation type="journal article" date="2004" name="Genome Res.">
        <title>The status, quality, and expansion of the NIH full-length cDNA project: the Mammalian Gene Collection (MGC).</title>
        <authorList>
            <consortium name="The MGC Project Team"/>
        </authorList>
    </citation>
    <scope>NUCLEOTIDE SEQUENCE [LARGE SCALE MRNA] (ISOFORM 1)</scope>
</reference>
<reference key="5">
    <citation type="journal article" date="2010" name="Cell">
        <title>A tissue-specific atlas of mouse protein phosphorylation and expression.</title>
        <authorList>
            <person name="Huttlin E.L."/>
            <person name="Jedrychowski M.P."/>
            <person name="Elias J.E."/>
            <person name="Goswami T."/>
            <person name="Rad R."/>
            <person name="Beausoleil S.A."/>
            <person name="Villen J."/>
            <person name="Haas W."/>
            <person name="Sowa M.E."/>
            <person name="Gygi S.P."/>
        </authorList>
    </citation>
    <scope>IDENTIFICATION BY MASS SPECTROMETRY [LARGE SCALE ANALYSIS]</scope>
    <source>
        <tissue>Testis</tissue>
    </source>
</reference>